<comment type="function">
    <text evidence="1">Calcium-dependent mitochondrial solute carrier.</text>
</comment>
<comment type="subcellular location">
    <subcellularLocation>
        <location evidence="1">Mitochondrion inner membrane</location>
        <topology evidence="1">Multi-pass membrane protein</topology>
    </subcellularLocation>
</comment>
<comment type="similarity">
    <text evidence="4">Belongs to the mitochondrial carrier (TC 2.A.29) family.</text>
</comment>
<organism>
    <name type="scientific">Xenopus tropicalis</name>
    <name type="common">Western clawed frog</name>
    <name type="synonym">Silurana tropicalis</name>
    <dbReference type="NCBI Taxonomy" id="8364"/>
    <lineage>
        <taxon>Eukaryota</taxon>
        <taxon>Metazoa</taxon>
        <taxon>Chordata</taxon>
        <taxon>Craniata</taxon>
        <taxon>Vertebrata</taxon>
        <taxon>Euteleostomi</taxon>
        <taxon>Amphibia</taxon>
        <taxon>Batrachia</taxon>
        <taxon>Anura</taxon>
        <taxon>Pipoidea</taxon>
        <taxon>Pipidae</taxon>
        <taxon>Xenopodinae</taxon>
        <taxon>Xenopus</taxon>
        <taxon>Silurana</taxon>
    </lineage>
</organism>
<keyword id="KW-0106">Calcium</keyword>
<keyword id="KW-0472">Membrane</keyword>
<keyword id="KW-0479">Metal-binding</keyword>
<keyword id="KW-0496">Mitochondrion</keyword>
<keyword id="KW-0999">Mitochondrion inner membrane</keyword>
<keyword id="KW-1185">Reference proteome</keyword>
<keyword id="KW-0677">Repeat</keyword>
<keyword id="KW-0812">Transmembrane</keyword>
<keyword id="KW-1133">Transmembrane helix</keyword>
<keyword id="KW-0813">Transport</keyword>
<dbReference type="EMBL" id="BC084177">
    <property type="protein sequence ID" value="AAH84177.1"/>
    <property type="molecule type" value="mRNA"/>
</dbReference>
<dbReference type="RefSeq" id="NP_001011052.1">
    <property type="nucleotide sequence ID" value="NM_001011052.1"/>
</dbReference>
<dbReference type="SMR" id="Q5XH95"/>
<dbReference type="FunCoup" id="Q5XH95">
    <property type="interactions" value="1794"/>
</dbReference>
<dbReference type="STRING" id="8364.ENSXETP00000006667"/>
<dbReference type="PaxDb" id="8364-ENSXETP00000016859"/>
<dbReference type="DNASU" id="496462"/>
<dbReference type="GeneID" id="496462"/>
<dbReference type="KEGG" id="xtr:496462"/>
<dbReference type="AGR" id="Xenbase:XB-GENE-5933194"/>
<dbReference type="CTD" id="114789"/>
<dbReference type="Xenbase" id="XB-GENE-5933194">
    <property type="gene designation" value="slc25a25"/>
</dbReference>
<dbReference type="eggNOG" id="KOG0036">
    <property type="taxonomic scope" value="Eukaryota"/>
</dbReference>
<dbReference type="HOGENOM" id="CLU_015166_2_0_1"/>
<dbReference type="InParanoid" id="Q5XH95"/>
<dbReference type="OrthoDB" id="270584at2759"/>
<dbReference type="TreeFam" id="TF313492"/>
<dbReference type="Proteomes" id="UP000008143">
    <property type="component" value="Chromosome 8"/>
</dbReference>
<dbReference type="GO" id="GO:0005743">
    <property type="term" value="C:mitochondrial inner membrane"/>
    <property type="evidence" value="ECO:0007669"/>
    <property type="project" value="UniProtKB-SubCell"/>
</dbReference>
<dbReference type="GO" id="GO:0005509">
    <property type="term" value="F:calcium ion binding"/>
    <property type="evidence" value="ECO:0007669"/>
    <property type="project" value="InterPro"/>
</dbReference>
<dbReference type="GO" id="GO:0055085">
    <property type="term" value="P:transmembrane transport"/>
    <property type="evidence" value="ECO:0007669"/>
    <property type="project" value="InterPro"/>
</dbReference>
<dbReference type="FunFam" id="1.10.238.10:FF:000098">
    <property type="entry name" value="calcium-binding mitochondrial carrier protein SCaMC-2 isoform X1"/>
    <property type="match status" value="1"/>
</dbReference>
<dbReference type="FunFam" id="1.10.238.10:FF:000028">
    <property type="entry name" value="Putative calcium-binding mitochondrial carrier protein scamc-2"/>
    <property type="match status" value="1"/>
</dbReference>
<dbReference type="FunFam" id="1.50.40.10:FF:000003">
    <property type="entry name" value="Putative calcium-binding mitochondrial carrier protein scamc-2"/>
    <property type="match status" value="1"/>
</dbReference>
<dbReference type="Gene3D" id="1.10.238.10">
    <property type="entry name" value="EF-hand"/>
    <property type="match status" value="2"/>
</dbReference>
<dbReference type="Gene3D" id="1.50.40.10">
    <property type="entry name" value="Mitochondrial carrier domain"/>
    <property type="match status" value="1"/>
</dbReference>
<dbReference type="InterPro" id="IPR011992">
    <property type="entry name" value="EF-hand-dom_pair"/>
</dbReference>
<dbReference type="InterPro" id="IPR002048">
    <property type="entry name" value="EF_hand_dom"/>
</dbReference>
<dbReference type="InterPro" id="IPR002167">
    <property type="entry name" value="GDC-like"/>
</dbReference>
<dbReference type="InterPro" id="IPR002067">
    <property type="entry name" value="Mit_carrier"/>
</dbReference>
<dbReference type="InterPro" id="IPR018108">
    <property type="entry name" value="Mitochondrial_sb/sol_carrier"/>
</dbReference>
<dbReference type="InterPro" id="IPR023395">
    <property type="entry name" value="Mt_carrier_dom_sf"/>
</dbReference>
<dbReference type="PANTHER" id="PTHR24089">
    <property type="entry name" value="SOLUTE CARRIER FAMILY 25"/>
    <property type="match status" value="1"/>
</dbReference>
<dbReference type="Pfam" id="PF13499">
    <property type="entry name" value="EF-hand_7"/>
    <property type="match status" value="2"/>
</dbReference>
<dbReference type="Pfam" id="PF00153">
    <property type="entry name" value="Mito_carr"/>
    <property type="match status" value="3"/>
</dbReference>
<dbReference type="PRINTS" id="PR00928">
    <property type="entry name" value="GRAVESDC"/>
</dbReference>
<dbReference type="PRINTS" id="PR00926">
    <property type="entry name" value="MITOCARRIER"/>
</dbReference>
<dbReference type="SMART" id="SM00054">
    <property type="entry name" value="EFh"/>
    <property type="match status" value="4"/>
</dbReference>
<dbReference type="SUPFAM" id="SSF47473">
    <property type="entry name" value="EF-hand"/>
    <property type="match status" value="1"/>
</dbReference>
<dbReference type="SUPFAM" id="SSF103506">
    <property type="entry name" value="Mitochondrial carrier"/>
    <property type="match status" value="1"/>
</dbReference>
<dbReference type="PROSITE" id="PS00018">
    <property type="entry name" value="EF_HAND_1"/>
    <property type="match status" value="1"/>
</dbReference>
<dbReference type="PROSITE" id="PS50222">
    <property type="entry name" value="EF_HAND_2"/>
    <property type="match status" value="4"/>
</dbReference>
<dbReference type="PROSITE" id="PS50920">
    <property type="entry name" value="SOLCAR"/>
    <property type="match status" value="3"/>
</dbReference>
<gene>
    <name type="primary">slc25a25</name>
    <name type="synonym">scamc2</name>
</gene>
<sequence length="513" mass="56640">MARPRSLVSPLLSGVFCQCDTVGGAPHTHDTPASPSLAAALAADPCGGLVCGGPEHETRLQILFQELDVNKDGGICINDLAVGLKRLGVHRTELELRKIVKAGDKDQDGQLDFEEFVHYLRDHEKKLRLVFKSLDKKNDGRIDAQEIMQSLRDLGVNISEQQAEKILKSMDKNGTMTIDWNEWRDYHLLHPAENIPEIILYWKHSTIFDVGENLLVPDEFTVEEKQTGMWWRHLVAGGGAGAVSRTCTAPLDRLKVLMQVHASRSNNMSMLGGFTQMIREGGIRSLWRGNGINVIKIAPESAIKFMAYEQMKRIIGSDQETLGIHERLVAGSLAGVIAQSSIYPMEVLKTRMALRKTGQYQGMLDCGKKILLKEGVSAFYKGYVPNMLGIIPYAGIDLAVYETLKNAWLQRYATSSADPGVFVLLACGTISSTCGQLASYPLALVRTRMQAEASVEGAPQMTMSKLFKHIVKTEGAFGLYRGLAPNFMKVIPAVSISYVVYENLKLTLGVQSR</sequence>
<reference key="1">
    <citation type="submission" date="2004-10" db="EMBL/GenBank/DDBJ databases">
        <authorList>
            <consortium name="NIH - Xenopus Gene Collection (XGC) project"/>
        </authorList>
    </citation>
    <scope>NUCLEOTIDE SEQUENCE [LARGE SCALE MRNA]</scope>
    <source>
        <tissue>Embryo</tissue>
    </source>
</reference>
<proteinExistence type="evidence at transcript level"/>
<protein>
    <recommendedName>
        <fullName>Calcium-binding mitochondrial carrier protein SCaMC-2</fullName>
    </recommendedName>
    <alternativeName>
        <fullName>Small calcium-binding mitochondrial carrier protein 2</fullName>
    </alternativeName>
    <alternativeName>
        <fullName>Solute carrier family 25 member 25</fullName>
    </alternativeName>
</protein>
<evidence type="ECO:0000250" key="1"/>
<evidence type="ECO:0000255" key="2"/>
<evidence type="ECO:0000255" key="3">
    <source>
        <dbReference type="PROSITE-ProRule" id="PRU00448"/>
    </source>
</evidence>
<evidence type="ECO:0000305" key="4"/>
<accession>Q5XH95</accession>
<name>SCMC2_XENTR</name>
<feature type="chain" id="PRO_0000317608" description="Calcium-binding mitochondrial carrier protein SCaMC-2">
    <location>
        <begin position="1"/>
        <end position="513"/>
    </location>
</feature>
<feature type="topological domain" description="Mitochondrial intermembrane" evidence="2">
    <location>
        <begin position="1"/>
        <end position="233"/>
    </location>
</feature>
<feature type="transmembrane region" description="Helical; Name=1" evidence="2">
    <location>
        <begin position="234"/>
        <end position="251"/>
    </location>
</feature>
<feature type="topological domain" description="Mitochondrial matrix" evidence="2">
    <location>
        <begin position="252"/>
        <end position="288"/>
    </location>
</feature>
<feature type="transmembrane region" description="Helical; Name=2" evidence="2">
    <location>
        <begin position="289"/>
        <end position="308"/>
    </location>
</feature>
<feature type="topological domain" description="Mitochondrial intermembrane" evidence="2">
    <location>
        <begin position="309"/>
        <end position="331"/>
    </location>
</feature>
<feature type="transmembrane region" description="Helical; Name=3" evidence="2">
    <location>
        <begin position="332"/>
        <end position="345"/>
    </location>
</feature>
<feature type="topological domain" description="Mitochondrial matrix" evidence="2">
    <location>
        <begin position="346"/>
        <end position="381"/>
    </location>
</feature>
<feature type="transmembrane region" description="Helical; Name=4" evidence="2">
    <location>
        <begin position="382"/>
        <end position="401"/>
    </location>
</feature>
<feature type="topological domain" description="Mitochondrial intermembrane" evidence="2">
    <location>
        <begin position="402"/>
        <end position="424"/>
    </location>
</feature>
<feature type="transmembrane region" description="Helical; Name=5" evidence="2">
    <location>
        <begin position="425"/>
        <end position="442"/>
    </location>
</feature>
<feature type="topological domain" description="Mitochondrial matrix" evidence="2">
    <location>
        <begin position="443"/>
        <end position="481"/>
    </location>
</feature>
<feature type="transmembrane region" description="Helical; Name=6" evidence="2">
    <location>
        <begin position="482"/>
        <end position="501"/>
    </location>
</feature>
<feature type="topological domain" description="Mitochondrial intermembrane" evidence="2">
    <location>
        <begin position="502"/>
        <end position="513"/>
    </location>
</feature>
<feature type="domain" description="EF-hand 1" evidence="3">
    <location>
        <begin position="55"/>
        <end position="90"/>
    </location>
</feature>
<feature type="domain" description="EF-hand 2" evidence="3">
    <location>
        <begin position="91"/>
        <end position="124"/>
    </location>
</feature>
<feature type="domain" description="EF-hand 3" evidence="3">
    <location>
        <begin position="122"/>
        <end position="157"/>
    </location>
</feature>
<feature type="domain" description="EF-hand 4" evidence="3">
    <location>
        <begin position="158"/>
        <end position="193"/>
    </location>
</feature>
<feature type="repeat" description="Solcar 1">
    <location>
        <begin position="228"/>
        <end position="314"/>
    </location>
</feature>
<feature type="repeat" description="Solcar 2">
    <location>
        <begin position="322"/>
        <end position="407"/>
    </location>
</feature>
<feature type="repeat" description="Solcar 3">
    <location>
        <begin position="419"/>
        <end position="507"/>
    </location>
</feature>
<feature type="binding site" evidence="4">
    <location>
        <position position="68"/>
    </location>
    <ligand>
        <name>Ca(2+)</name>
        <dbReference type="ChEBI" id="CHEBI:29108"/>
        <label>1</label>
    </ligand>
</feature>
<feature type="binding site" evidence="4">
    <location>
        <position position="70"/>
    </location>
    <ligand>
        <name>Ca(2+)</name>
        <dbReference type="ChEBI" id="CHEBI:29108"/>
        <label>1</label>
    </ligand>
</feature>
<feature type="binding site" evidence="4">
    <location>
        <position position="72"/>
    </location>
    <ligand>
        <name>Ca(2+)</name>
        <dbReference type="ChEBI" id="CHEBI:29108"/>
        <label>1</label>
    </ligand>
</feature>
<feature type="binding site" evidence="4">
    <location>
        <position position="79"/>
    </location>
    <ligand>
        <name>Ca(2+)</name>
        <dbReference type="ChEBI" id="CHEBI:29108"/>
        <label>1</label>
    </ligand>
</feature>
<feature type="binding site" evidence="3">
    <location>
        <position position="104"/>
    </location>
    <ligand>
        <name>Ca(2+)</name>
        <dbReference type="ChEBI" id="CHEBI:29108"/>
        <label>2</label>
    </ligand>
</feature>
<feature type="binding site" evidence="3">
    <location>
        <position position="106"/>
    </location>
    <ligand>
        <name>Ca(2+)</name>
        <dbReference type="ChEBI" id="CHEBI:29108"/>
        <label>2</label>
    </ligand>
</feature>
<feature type="binding site" evidence="3">
    <location>
        <position position="108"/>
    </location>
    <ligand>
        <name>Ca(2+)</name>
        <dbReference type="ChEBI" id="CHEBI:29108"/>
        <label>2</label>
    </ligand>
</feature>
<feature type="binding site" evidence="3">
    <location>
        <position position="110"/>
    </location>
    <ligand>
        <name>Ca(2+)</name>
        <dbReference type="ChEBI" id="CHEBI:29108"/>
        <label>2</label>
    </ligand>
</feature>
<feature type="binding site" evidence="3">
    <location>
        <position position="115"/>
    </location>
    <ligand>
        <name>Ca(2+)</name>
        <dbReference type="ChEBI" id="CHEBI:29108"/>
        <label>2</label>
    </ligand>
</feature>